<protein>
    <recommendedName>
        <fullName evidence="1">Aspartate--tRNA ligase</fullName>
        <ecNumber evidence="1">6.1.1.12</ecNumber>
    </recommendedName>
    <alternativeName>
        <fullName evidence="1">Aspartyl-tRNA synthetase</fullName>
        <shortName evidence="1">AspRS</shortName>
    </alternativeName>
</protein>
<sequence>MNLDNAKCFKQRVFIGNLTSEHLNKTVTIAGWVKRIKKLGELNFVIVGDKTNTIQVTCKNKEQVKYLTREDLVIVKGKLKRLDSVRFEITNPTITLFAKSKTPPLIIEDKTDALEEVRLRYRYLDLRRPVMQKRLALRHKVTLAVRNWLDQMGFIEVETPTLTKSTPEGARDFLVPARIREHSFYALPQSPQIYKQLLMVGGTEKYFQIAHVYRDEDSRKDRQPEHTQIDLEVAFYTKEMVMDLIQRLFVDVFRQVLNIKLKKPFPVLKFAEAFNRFGSDKPDLRYGFELEDCTDLFQDSPNQFTNLINAGGIVGGIQLPNLYLDEVSFKALRKLAKDNGVSLEFYSDKASSLKQPLDLPLAGTILLVAHKSKTQAWTALGAIRNELKYHLNLVKPNQYSFCWIVDFPLYEFDEKEQKWVSAHNMFSNPQPQWLVNFENHKAEALSEQYDLVLNGFELGSGSIRIHDPEVQTRLMQSLGVDPQQFGFVMEAYQYGAPVHAGMGLGLDRLMMIINNVDNIREVMAFPKNAQGIEMHTNAPDQVDIKDITTIWSKHPVK</sequence>
<gene>
    <name evidence="1" type="primary">aspS</name>
    <name type="ordered locus">MPN_046</name>
    <name type="ORF">MP108</name>
</gene>
<comment type="function">
    <text evidence="1">Catalyzes the attachment of L-aspartate to tRNA(Asp) in a two-step reaction: L-aspartate is first activated by ATP to form Asp-AMP and then transferred to the acceptor end of tRNA(Asp).</text>
</comment>
<comment type="catalytic activity">
    <reaction evidence="1">
        <text>tRNA(Asp) + L-aspartate + ATP = L-aspartyl-tRNA(Asp) + AMP + diphosphate</text>
        <dbReference type="Rhea" id="RHEA:19649"/>
        <dbReference type="Rhea" id="RHEA-COMP:9660"/>
        <dbReference type="Rhea" id="RHEA-COMP:9678"/>
        <dbReference type="ChEBI" id="CHEBI:29991"/>
        <dbReference type="ChEBI" id="CHEBI:30616"/>
        <dbReference type="ChEBI" id="CHEBI:33019"/>
        <dbReference type="ChEBI" id="CHEBI:78442"/>
        <dbReference type="ChEBI" id="CHEBI:78516"/>
        <dbReference type="ChEBI" id="CHEBI:456215"/>
        <dbReference type="EC" id="6.1.1.12"/>
    </reaction>
</comment>
<comment type="subunit">
    <text evidence="1">Homodimer.</text>
</comment>
<comment type="subcellular location">
    <subcellularLocation>
        <location evidence="1">Cytoplasm</location>
    </subcellularLocation>
</comment>
<comment type="similarity">
    <text evidence="1">Belongs to the class-II aminoacyl-tRNA synthetase family. Type 1 subfamily.</text>
</comment>
<keyword id="KW-0030">Aminoacyl-tRNA synthetase</keyword>
<keyword id="KW-0067">ATP-binding</keyword>
<keyword id="KW-0963">Cytoplasm</keyword>
<keyword id="KW-0436">Ligase</keyword>
<keyword id="KW-0547">Nucleotide-binding</keyword>
<keyword id="KW-0648">Protein biosynthesis</keyword>
<keyword id="KW-1185">Reference proteome</keyword>
<accession>P75068</accession>
<feature type="chain" id="PRO_0000110907" description="Aspartate--tRNA ligase">
    <location>
        <begin position="1"/>
        <end position="557"/>
    </location>
</feature>
<feature type="region of interest" description="Aspartate" evidence="1">
    <location>
        <begin position="192"/>
        <end position="195"/>
    </location>
</feature>
<feature type="binding site" evidence="1">
    <location>
        <position position="168"/>
    </location>
    <ligand>
        <name>L-aspartate</name>
        <dbReference type="ChEBI" id="CHEBI:29991"/>
    </ligand>
</feature>
<feature type="binding site" evidence="1">
    <location>
        <begin position="214"/>
        <end position="216"/>
    </location>
    <ligand>
        <name>ATP</name>
        <dbReference type="ChEBI" id="CHEBI:30616"/>
    </ligand>
</feature>
<feature type="binding site" evidence="1">
    <location>
        <position position="214"/>
    </location>
    <ligand>
        <name>L-aspartate</name>
        <dbReference type="ChEBI" id="CHEBI:29991"/>
    </ligand>
</feature>
<feature type="binding site" evidence="1">
    <location>
        <position position="223"/>
    </location>
    <ligand>
        <name>ATP</name>
        <dbReference type="ChEBI" id="CHEBI:30616"/>
    </ligand>
</feature>
<feature type="binding site" evidence="1">
    <location>
        <position position="423"/>
    </location>
    <ligand>
        <name>L-aspartate</name>
        <dbReference type="ChEBI" id="CHEBI:29991"/>
    </ligand>
</feature>
<feature type="binding site" evidence="1">
    <location>
        <position position="457"/>
    </location>
    <ligand>
        <name>ATP</name>
        <dbReference type="ChEBI" id="CHEBI:30616"/>
    </ligand>
</feature>
<feature type="binding site" evidence="1">
    <location>
        <position position="464"/>
    </location>
    <ligand>
        <name>L-aspartate</name>
        <dbReference type="ChEBI" id="CHEBI:29991"/>
    </ligand>
</feature>
<feature type="binding site" evidence="1">
    <location>
        <begin position="505"/>
        <end position="508"/>
    </location>
    <ligand>
        <name>ATP</name>
        <dbReference type="ChEBI" id="CHEBI:30616"/>
    </ligand>
</feature>
<organism>
    <name type="scientific">Mycoplasma pneumoniae (strain ATCC 29342 / M129 / Subtype 1)</name>
    <name type="common">Mycoplasmoides pneumoniae</name>
    <dbReference type="NCBI Taxonomy" id="272634"/>
    <lineage>
        <taxon>Bacteria</taxon>
        <taxon>Bacillati</taxon>
        <taxon>Mycoplasmatota</taxon>
        <taxon>Mycoplasmoidales</taxon>
        <taxon>Mycoplasmoidaceae</taxon>
        <taxon>Mycoplasmoides</taxon>
    </lineage>
</organism>
<evidence type="ECO:0000255" key="1">
    <source>
        <dbReference type="HAMAP-Rule" id="MF_00044"/>
    </source>
</evidence>
<proteinExistence type="inferred from homology"/>
<reference key="1">
    <citation type="journal article" date="1996" name="Nucleic Acids Res.">
        <title>Complete sequence analysis of the genome of the bacterium Mycoplasma pneumoniae.</title>
        <authorList>
            <person name="Himmelreich R."/>
            <person name="Hilbert H."/>
            <person name="Plagens H."/>
            <person name="Pirkl E."/>
            <person name="Li B.-C."/>
            <person name="Herrmann R."/>
        </authorList>
    </citation>
    <scope>NUCLEOTIDE SEQUENCE [LARGE SCALE GENOMIC DNA]</scope>
    <source>
        <strain>ATCC 29342 / M129 / Subtype 1</strain>
    </source>
</reference>
<dbReference type="EC" id="6.1.1.12" evidence="1"/>
<dbReference type="EMBL" id="U00089">
    <property type="protein sequence ID" value="AAB95756.1"/>
    <property type="molecule type" value="Genomic_DNA"/>
</dbReference>
<dbReference type="PIR" id="S73434">
    <property type="entry name" value="S73434"/>
</dbReference>
<dbReference type="RefSeq" id="NP_109734.1">
    <property type="nucleotide sequence ID" value="NC_000912.1"/>
</dbReference>
<dbReference type="RefSeq" id="WP_010874403.1">
    <property type="nucleotide sequence ID" value="NZ_OU342337.1"/>
</dbReference>
<dbReference type="SMR" id="P75068"/>
<dbReference type="IntAct" id="P75068">
    <property type="interactions" value="1"/>
</dbReference>
<dbReference type="STRING" id="272634.MPN_046"/>
<dbReference type="EnsemblBacteria" id="AAB95756">
    <property type="protein sequence ID" value="AAB95756"/>
    <property type="gene ID" value="MPN_046"/>
</dbReference>
<dbReference type="GeneID" id="66609316"/>
<dbReference type="KEGG" id="mpn:MPN_046"/>
<dbReference type="PATRIC" id="fig|272634.6.peg.46"/>
<dbReference type="HOGENOM" id="CLU_014330_3_2_14"/>
<dbReference type="OrthoDB" id="9802326at2"/>
<dbReference type="BioCyc" id="MPNE272634:G1GJ3-63-MONOMER"/>
<dbReference type="Proteomes" id="UP000000808">
    <property type="component" value="Chromosome"/>
</dbReference>
<dbReference type="GO" id="GO:0005737">
    <property type="term" value="C:cytoplasm"/>
    <property type="evidence" value="ECO:0007669"/>
    <property type="project" value="UniProtKB-SubCell"/>
</dbReference>
<dbReference type="GO" id="GO:0004815">
    <property type="term" value="F:aspartate-tRNA ligase activity"/>
    <property type="evidence" value="ECO:0007669"/>
    <property type="project" value="UniProtKB-UniRule"/>
</dbReference>
<dbReference type="GO" id="GO:0005524">
    <property type="term" value="F:ATP binding"/>
    <property type="evidence" value="ECO:0007669"/>
    <property type="project" value="UniProtKB-UniRule"/>
</dbReference>
<dbReference type="GO" id="GO:0003676">
    <property type="term" value="F:nucleic acid binding"/>
    <property type="evidence" value="ECO:0007669"/>
    <property type="project" value="InterPro"/>
</dbReference>
<dbReference type="GO" id="GO:0006422">
    <property type="term" value="P:aspartyl-tRNA aminoacylation"/>
    <property type="evidence" value="ECO:0007669"/>
    <property type="project" value="UniProtKB-UniRule"/>
</dbReference>
<dbReference type="CDD" id="cd00777">
    <property type="entry name" value="AspRS_core"/>
    <property type="match status" value="1"/>
</dbReference>
<dbReference type="Gene3D" id="3.30.930.10">
    <property type="entry name" value="Bira Bifunctional Protein, Domain 2"/>
    <property type="match status" value="2"/>
</dbReference>
<dbReference type="Gene3D" id="3.30.1360.30">
    <property type="entry name" value="GAD-like domain"/>
    <property type="match status" value="1"/>
</dbReference>
<dbReference type="Gene3D" id="2.40.50.140">
    <property type="entry name" value="Nucleic acid-binding proteins"/>
    <property type="match status" value="1"/>
</dbReference>
<dbReference type="HAMAP" id="MF_00044">
    <property type="entry name" value="Asp_tRNA_synth_type1"/>
    <property type="match status" value="1"/>
</dbReference>
<dbReference type="InterPro" id="IPR004364">
    <property type="entry name" value="Aa-tRNA-synt_II"/>
</dbReference>
<dbReference type="InterPro" id="IPR006195">
    <property type="entry name" value="aa-tRNA-synth_II"/>
</dbReference>
<dbReference type="InterPro" id="IPR045864">
    <property type="entry name" value="aa-tRNA-synth_II/BPL/LPL"/>
</dbReference>
<dbReference type="InterPro" id="IPR004524">
    <property type="entry name" value="Asp-tRNA-ligase_1"/>
</dbReference>
<dbReference type="InterPro" id="IPR002312">
    <property type="entry name" value="Asp/Asn-tRNA-synth_IIb"/>
</dbReference>
<dbReference type="InterPro" id="IPR047090">
    <property type="entry name" value="AspRS_core"/>
</dbReference>
<dbReference type="InterPro" id="IPR004115">
    <property type="entry name" value="GAD-like_sf"/>
</dbReference>
<dbReference type="InterPro" id="IPR012340">
    <property type="entry name" value="NA-bd_OB-fold"/>
</dbReference>
<dbReference type="InterPro" id="IPR004365">
    <property type="entry name" value="NA-bd_OB_tRNA"/>
</dbReference>
<dbReference type="NCBIfam" id="TIGR00459">
    <property type="entry name" value="aspS_bact"/>
    <property type="match status" value="1"/>
</dbReference>
<dbReference type="NCBIfam" id="NF001750">
    <property type="entry name" value="PRK00476.1"/>
    <property type="match status" value="1"/>
</dbReference>
<dbReference type="PANTHER" id="PTHR22594:SF5">
    <property type="entry name" value="ASPARTATE--TRNA LIGASE, MITOCHONDRIAL"/>
    <property type="match status" value="1"/>
</dbReference>
<dbReference type="PANTHER" id="PTHR22594">
    <property type="entry name" value="ASPARTYL/LYSYL-TRNA SYNTHETASE"/>
    <property type="match status" value="1"/>
</dbReference>
<dbReference type="Pfam" id="PF00152">
    <property type="entry name" value="tRNA-synt_2"/>
    <property type="match status" value="1"/>
</dbReference>
<dbReference type="Pfam" id="PF01336">
    <property type="entry name" value="tRNA_anti-codon"/>
    <property type="match status" value="1"/>
</dbReference>
<dbReference type="PRINTS" id="PR01042">
    <property type="entry name" value="TRNASYNTHASP"/>
</dbReference>
<dbReference type="SUPFAM" id="SSF55681">
    <property type="entry name" value="Class II aaRS and biotin synthetases"/>
    <property type="match status" value="1"/>
</dbReference>
<dbReference type="SUPFAM" id="SSF55261">
    <property type="entry name" value="GAD domain-like"/>
    <property type="match status" value="1"/>
</dbReference>
<dbReference type="SUPFAM" id="SSF50249">
    <property type="entry name" value="Nucleic acid-binding proteins"/>
    <property type="match status" value="1"/>
</dbReference>
<dbReference type="PROSITE" id="PS50862">
    <property type="entry name" value="AA_TRNA_LIGASE_II"/>
    <property type="match status" value="1"/>
</dbReference>
<name>SYD_MYCPN</name>